<protein>
    <recommendedName>
        <fullName evidence="1">Orotate phosphoribosyltransferase</fullName>
        <shortName evidence="1">OPRT</shortName>
        <shortName evidence="1">OPRTase</shortName>
        <ecNumber evidence="1">2.4.2.10</ecNumber>
    </recommendedName>
</protein>
<accession>Q9CGM8</accession>
<organism>
    <name type="scientific">Lactococcus lactis subsp. lactis (strain IL1403)</name>
    <name type="common">Streptococcus lactis</name>
    <dbReference type="NCBI Taxonomy" id="272623"/>
    <lineage>
        <taxon>Bacteria</taxon>
        <taxon>Bacillati</taxon>
        <taxon>Bacillota</taxon>
        <taxon>Bacilli</taxon>
        <taxon>Lactobacillales</taxon>
        <taxon>Streptococcaceae</taxon>
        <taxon>Lactococcus</taxon>
    </lineage>
</organism>
<evidence type="ECO:0000255" key="1">
    <source>
        <dbReference type="HAMAP-Rule" id="MF_01208"/>
    </source>
</evidence>
<feature type="chain" id="PRO_0000110704" description="Orotate phosphoribosyltransferase">
    <location>
        <begin position="1"/>
        <end position="209"/>
    </location>
</feature>
<feature type="binding site" evidence="1">
    <location>
        <position position="96"/>
    </location>
    <ligand>
        <name>5-phospho-alpha-D-ribose 1-diphosphate</name>
        <dbReference type="ChEBI" id="CHEBI:58017"/>
        <note>ligand shared between dimeric partners</note>
    </ligand>
</feature>
<feature type="binding site" evidence="1">
    <location>
        <position position="100"/>
    </location>
    <ligand>
        <name>5-phospho-alpha-D-ribose 1-diphosphate</name>
        <dbReference type="ChEBI" id="CHEBI:58017"/>
        <note>ligand shared between dimeric partners</note>
    </ligand>
</feature>
<feature type="binding site" evidence="1">
    <location>
        <position position="102"/>
    </location>
    <ligand>
        <name>5-phospho-alpha-D-ribose 1-diphosphate</name>
        <dbReference type="ChEBI" id="CHEBI:58017"/>
        <note>ligand shared between dimeric partners</note>
    </ligand>
</feature>
<feature type="binding site" description="in other chain" evidence="1">
    <location>
        <begin position="122"/>
        <end position="130"/>
    </location>
    <ligand>
        <name>5-phospho-alpha-D-ribose 1-diphosphate</name>
        <dbReference type="ChEBI" id="CHEBI:58017"/>
        <note>ligand shared between dimeric partners</note>
    </ligand>
</feature>
<feature type="binding site" evidence="1">
    <location>
        <position position="126"/>
    </location>
    <ligand>
        <name>orotate</name>
        <dbReference type="ChEBI" id="CHEBI:30839"/>
    </ligand>
</feature>
<proteinExistence type="inferred from homology"/>
<keyword id="KW-0328">Glycosyltransferase</keyword>
<keyword id="KW-0460">Magnesium</keyword>
<keyword id="KW-0665">Pyrimidine biosynthesis</keyword>
<keyword id="KW-1185">Reference proteome</keyword>
<keyword id="KW-0808">Transferase</keyword>
<dbReference type="EC" id="2.4.2.10" evidence="1"/>
<dbReference type="EMBL" id="AE005176">
    <property type="protein sequence ID" value="AAK05166.1"/>
    <property type="molecule type" value="Genomic_DNA"/>
</dbReference>
<dbReference type="PIR" id="D86758">
    <property type="entry name" value="D86758"/>
</dbReference>
<dbReference type="RefSeq" id="NP_267224.1">
    <property type="nucleotide sequence ID" value="NC_002662.1"/>
</dbReference>
<dbReference type="RefSeq" id="WP_003132758.1">
    <property type="nucleotide sequence ID" value="NC_002662.1"/>
</dbReference>
<dbReference type="SMR" id="Q9CGM8"/>
<dbReference type="PaxDb" id="272623-L80411"/>
<dbReference type="EnsemblBacteria" id="AAK05166">
    <property type="protein sequence ID" value="AAK05166"/>
    <property type="gene ID" value="L80411"/>
</dbReference>
<dbReference type="GeneID" id="89633192"/>
<dbReference type="KEGG" id="lla:L80411"/>
<dbReference type="PATRIC" id="fig|272623.7.peg.1145"/>
<dbReference type="eggNOG" id="COG0461">
    <property type="taxonomic scope" value="Bacteria"/>
</dbReference>
<dbReference type="HOGENOM" id="CLU_074878_1_1_9"/>
<dbReference type="OrthoDB" id="9802134at2"/>
<dbReference type="UniPathway" id="UPA00070">
    <property type="reaction ID" value="UER00119"/>
</dbReference>
<dbReference type="Proteomes" id="UP000002196">
    <property type="component" value="Chromosome"/>
</dbReference>
<dbReference type="GO" id="GO:0000287">
    <property type="term" value="F:magnesium ion binding"/>
    <property type="evidence" value="ECO:0007669"/>
    <property type="project" value="UniProtKB-UniRule"/>
</dbReference>
<dbReference type="GO" id="GO:0004588">
    <property type="term" value="F:orotate phosphoribosyltransferase activity"/>
    <property type="evidence" value="ECO:0007669"/>
    <property type="project" value="UniProtKB-UniRule"/>
</dbReference>
<dbReference type="GO" id="GO:0044205">
    <property type="term" value="P:'de novo' UMP biosynthetic process"/>
    <property type="evidence" value="ECO:0007669"/>
    <property type="project" value="UniProtKB-UniRule"/>
</dbReference>
<dbReference type="GO" id="GO:0019856">
    <property type="term" value="P:pyrimidine nucleobase biosynthetic process"/>
    <property type="evidence" value="ECO:0007669"/>
    <property type="project" value="TreeGrafter"/>
</dbReference>
<dbReference type="CDD" id="cd06223">
    <property type="entry name" value="PRTases_typeI"/>
    <property type="match status" value="1"/>
</dbReference>
<dbReference type="Gene3D" id="3.40.50.2020">
    <property type="match status" value="1"/>
</dbReference>
<dbReference type="HAMAP" id="MF_01208">
    <property type="entry name" value="PyrE"/>
    <property type="match status" value="1"/>
</dbReference>
<dbReference type="InterPro" id="IPR023031">
    <property type="entry name" value="OPRT"/>
</dbReference>
<dbReference type="InterPro" id="IPR004467">
    <property type="entry name" value="Or_phspho_trans_dom"/>
</dbReference>
<dbReference type="InterPro" id="IPR000836">
    <property type="entry name" value="PRibTrfase_dom"/>
</dbReference>
<dbReference type="InterPro" id="IPR029057">
    <property type="entry name" value="PRTase-like"/>
</dbReference>
<dbReference type="NCBIfam" id="TIGR00336">
    <property type="entry name" value="pyrE"/>
    <property type="match status" value="1"/>
</dbReference>
<dbReference type="PANTHER" id="PTHR19278">
    <property type="entry name" value="OROTATE PHOSPHORIBOSYLTRANSFERASE"/>
    <property type="match status" value="1"/>
</dbReference>
<dbReference type="PANTHER" id="PTHR19278:SF9">
    <property type="entry name" value="URIDINE 5'-MONOPHOSPHATE SYNTHASE"/>
    <property type="match status" value="1"/>
</dbReference>
<dbReference type="Pfam" id="PF00156">
    <property type="entry name" value="Pribosyltran"/>
    <property type="match status" value="1"/>
</dbReference>
<dbReference type="SUPFAM" id="SSF53271">
    <property type="entry name" value="PRTase-like"/>
    <property type="match status" value="1"/>
</dbReference>
<dbReference type="PROSITE" id="PS00103">
    <property type="entry name" value="PUR_PYR_PR_TRANSFER"/>
    <property type="match status" value="1"/>
</dbReference>
<gene>
    <name evidence="1" type="primary">pyrE</name>
    <name type="ordered locus">LL1068</name>
    <name type="ORF">L80411</name>
</gene>
<sequence>MSISKAIAADLLEIKAVSLSPSQPFTWASGIKSPIYTDNRVTLAYPEVRSQIEGAFAELIKAEFPEVEVIAGTATAGIPHGAIIADYLKLPFAYIRSKPKDHGAGNQVEGRVTKGQKMVVVEDLISTGGSVLEAVAAAEREGADVLGVVAIFTYELEKANRKFADAGVKLATLTTYSELIEIAKETGYVTKEELELLKKFKENQETWQN</sequence>
<comment type="function">
    <text evidence="1">Catalyzes the transfer of a ribosyl phosphate group from 5-phosphoribose 1-diphosphate to orotate, leading to the formation of orotidine monophosphate (OMP).</text>
</comment>
<comment type="catalytic activity">
    <reaction evidence="1">
        <text>orotidine 5'-phosphate + diphosphate = orotate + 5-phospho-alpha-D-ribose 1-diphosphate</text>
        <dbReference type="Rhea" id="RHEA:10380"/>
        <dbReference type="ChEBI" id="CHEBI:30839"/>
        <dbReference type="ChEBI" id="CHEBI:33019"/>
        <dbReference type="ChEBI" id="CHEBI:57538"/>
        <dbReference type="ChEBI" id="CHEBI:58017"/>
        <dbReference type="EC" id="2.4.2.10"/>
    </reaction>
</comment>
<comment type="cofactor">
    <cofactor evidence="1">
        <name>Mg(2+)</name>
        <dbReference type="ChEBI" id="CHEBI:18420"/>
    </cofactor>
</comment>
<comment type="pathway">
    <text evidence="1">Pyrimidine metabolism; UMP biosynthesis via de novo pathway; UMP from orotate: step 1/2.</text>
</comment>
<comment type="subunit">
    <text evidence="1">Homodimer.</text>
</comment>
<comment type="similarity">
    <text evidence="1">Belongs to the purine/pyrimidine phosphoribosyltransferase family. PyrE subfamily.</text>
</comment>
<name>PYRE_LACLA</name>
<reference key="1">
    <citation type="journal article" date="2001" name="Genome Res.">
        <title>The complete genome sequence of the lactic acid bacterium Lactococcus lactis ssp. lactis IL1403.</title>
        <authorList>
            <person name="Bolotin A."/>
            <person name="Wincker P."/>
            <person name="Mauger S."/>
            <person name="Jaillon O."/>
            <person name="Malarme K."/>
            <person name="Weissenbach J."/>
            <person name="Ehrlich S.D."/>
            <person name="Sorokin A."/>
        </authorList>
    </citation>
    <scope>NUCLEOTIDE SEQUENCE [LARGE SCALE GENOMIC DNA]</scope>
    <source>
        <strain>IL1403</strain>
    </source>
</reference>